<feature type="chain" id="PRO_0000081444" description="Two-component response regulator-like PRR73">
    <location>
        <begin position="1"/>
        <end position="767"/>
    </location>
</feature>
<feature type="domain" description="Response regulatory" evidence="2">
    <location>
        <begin position="82"/>
        <end position="200"/>
    </location>
</feature>
<feature type="domain" description="CCT" evidence="3">
    <location>
        <begin position="712"/>
        <end position="754"/>
    </location>
</feature>
<feature type="region of interest" description="Disordered" evidence="4">
    <location>
        <begin position="1"/>
        <end position="64"/>
    </location>
</feature>
<feature type="region of interest" description="Disordered" evidence="4">
    <location>
        <begin position="205"/>
        <end position="272"/>
    </location>
</feature>
<feature type="region of interest" description="Disordered" evidence="4">
    <location>
        <begin position="312"/>
        <end position="388"/>
    </location>
</feature>
<feature type="region of interest" description="Disordered" evidence="4">
    <location>
        <begin position="476"/>
        <end position="546"/>
    </location>
</feature>
<feature type="region of interest" description="Disordered" evidence="4">
    <location>
        <begin position="646"/>
        <end position="701"/>
    </location>
</feature>
<feature type="region of interest" description="Disordered" evidence="4">
    <location>
        <begin position="727"/>
        <end position="767"/>
    </location>
</feature>
<feature type="compositionally biased region" description="Low complexity" evidence="4">
    <location>
        <begin position="205"/>
        <end position="214"/>
    </location>
</feature>
<feature type="compositionally biased region" description="Acidic residues" evidence="4">
    <location>
        <begin position="238"/>
        <end position="252"/>
    </location>
</feature>
<feature type="compositionally biased region" description="Polar residues" evidence="4">
    <location>
        <begin position="263"/>
        <end position="272"/>
    </location>
</feature>
<feature type="compositionally biased region" description="Polar residues" evidence="4">
    <location>
        <begin position="343"/>
        <end position="361"/>
    </location>
</feature>
<feature type="compositionally biased region" description="Polar residues" evidence="4">
    <location>
        <begin position="488"/>
        <end position="497"/>
    </location>
</feature>
<feature type="compositionally biased region" description="Low complexity" evidence="4">
    <location>
        <begin position="518"/>
        <end position="531"/>
    </location>
</feature>
<feature type="compositionally biased region" description="Polar residues" evidence="4">
    <location>
        <begin position="532"/>
        <end position="543"/>
    </location>
</feature>
<feature type="compositionally biased region" description="Gly residues" evidence="4">
    <location>
        <begin position="689"/>
        <end position="700"/>
    </location>
</feature>
<feature type="compositionally biased region" description="Basic residues" evidence="4">
    <location>
        <begin position="727"/>
        <end position="738"/>
    </location>
</feature>
<evidence type="ECO:0000250" key="1"/>
<evidence type="ECO:0000255" key="2">
    <source>
        <dbReference type="PROSITE-ProRule" id="PRU00169"/>
    </source>
</evidence>
<evidence type="ECO:0000255" key="3">
    <source>
        <dbReference type="PROSITE-ProRule" id="PRU00357"/>
    </source>
</evidence>
<evidence type="ECO:0000256" key="4">
    <source>
        <dbReference type="SAM" id="MobiDB-lite"/>
    </source>
</evidence>
<evidence type="ECO:0000269" key="5">
    <source>
    </source>
</evidence>
<evidence type="ECO:0000269" key="6">
    <source>
    </source>
</evidence>
<evidence type="ECO:0000305" key="7"/>
<comment type="function">
    <text evidence="1">Controls photoperiodic flowering response. Seems to be one of the component of the circadian clock. Expression of several members of the ARR-like family is controlled by circadian rhythm. The particular coordinated sequential expression of PRR73, PRR37, PRR95, PRR59 and PPR1 result to circadian waves that may be at the basis of the endogenous circadian clock (By similarity).</text>
</comment>
<comment type="subcellular location">
    <subcellularLocation>
        <location evidence="7">Nucleus</location>
    </subcellularLocation>
</comment>
<comment type="induction">
    <text evidence="5 6">Expressed with a circadian rhythm showing a broad peak in the middle day.</text>
</comment>
<comment type="similarity">
    <text evidence="7">Belongs to the ARR-like family.</text>
</comment>
<comment type="caution">
    <text evidence="7">Lacks the phospho-accepting Asp (here Glu-133), present in the receiver domain, which is one of the conserved features of two-component response regulators (ARRs) family.</text>
</comment>
<comment type="sequence caution" evidence="7">
    <conflict type="erroneous gene model prediction">
        <sequence resource="EMBL-CDS" id="AAN64489"/>
    </conflict>
</comment>
<organism>
    <name type="scientific">Oryza sativa subsp. japonica</name>
    <name type="common">Rice</name>
    <dbReference type="NCBI Taxonomy" id="39947"/>
    <lineage>
        <taxon>Eukaryota</taxon>
        <taxon>Viridiplantae</taxon>
        <taxon>Streptophyta</taxon>
        <taxon>Embryophyta</taxon>
        <taxon>Tracheophyta</taxon>
        <taxon>Spermatophyta</taxon>
        <taxon>Magnoliopsida</taxon>
        <taxon>Liliopsida</taxon>
        <taxon>Poales</taxon>
        <taxon>Poaceae</taxon>
        <taxon>BOP clade</taxon>
        <taxon>Oryzoideae</taxon>
        <taxon>Oryzeae</taxon>
        <taxon>Oryzinae</taxon>
        <taxon>Oryza</taxon>
        <taxon>Oryza sativa</taxon>
    </lineage>
</organism>
<sequence length="767" mass="84079">MGSACEAGTDEPSRDDVKGTGNGILENGHSHKPEEEEWRNGMGEDLPNGHSTPPEPQQTDEQKEHQVQIVRWERFLPVKTLRVLLVENDDSTRQVVSALLRKCCYEVIPAENGLHAWQCLEDLQNHIDLVLTEVVMPRLSGIGLLSKITSHKICKDIPVIMMSSNDSMGTVFKCLSKGAVDFLVKPIRKNELKNLWQHVWRRCHSSSGSGSESGIRTQKCTKPKVDDEYENNSGSNNDNEDDDDNDEDDDDLSVGHNARDGSDNGSGTQSSWTKRAVEIDSPQQMSPDQPSDLPDSTCAQVIHPTSEICSNRWLPTANKRSGKKHKENNDDSMGKYLEIGAPRNSSMEYQSSPREMSVNPTEKQHETLMPQSKTTRETDSRNTQNEPTTQTVDLISSIARSTDDKQVVRINNAPDCSSKVPDGNDKNRDSLIDMTSEELGLKRLKTTGSATEIHDERNILKRSDLSAFTRYHTTVASNQGGAGFGGSCSPQDNSSEALKTDSNCKVKSNSDAAEIKQGSNGSSNNNDMGSSTKNAITKPSSNRGKVISPSAVKATQHTSAFHPVQRQTSPANVVGKDKVDEGIANGVNVGHPVDVQNSFMQHHHHVHYYVHVMTQQQQQPSIERGSSDAQCGSSNVFDPPIEGHAANYSVNGSFSGGHNGNNGQRGPSTAPNVGRPNMETVNGIVDENGAGGGNGSGSGSGNDLYQNGVCYREAALNKFRQKRKVRNFGKKVRYQSRKRLAEQRPRIRGQFVRQSGQEDQAGQDEDR</sequence>
<name>PRR73_ORYSJ</name>
<keyword id="KW-0090">Biological rhythms</keyword>
<keyword id="KW-0539">Nucleus</keyword>
<keyword id="KW-1185">Reference proteome</keyword>
<keyword id="KW-0804">Transcription</keyword>
<keyword id="KW-0805">Transcription regulation</keyword>
<keyword id="KW-0902">Two-component regulatory system</keyword>
<accession>Q10N34</accession>
<accession>Q689G4</accession>
<accession>Q689G7</accession>
<accession>Q8H8T5</accession>
<gene>
    <name type="primary">PRR73</name>
    <name type="ordered locus">Os03g0284100</name>
    <name type="ordered locus">LOC_Os03g17570</name>
</gene>
<dbReference type="EMBL" id="AB189040">
    <property type="protein sequence ID" value="BAD38856.1"/>
    <property type="molecule type" value="mRNA"/>
</dbReference>
<dbReference type="EMBL" id="AC084405">
    <property type="protein sequence ID" value="AAN64489.1"/>
    <property type="status" value="ALT_SEQ"/>
    <property type="molecule type" value="Genomic_DNA"/>
</dbReference>
<dbReference type="EMBL" id="DP000009">
    <property type="protein sequence ID" value="ABF95338.1"/>
    <property type="molecule type" value="Genomic_DNA"/>
</dbReference>
<dbReference type="EMBL" id="AP008209">
    <property type="protein sequence ID" value="BAF11674.1"/>
    <property type="molecule type" value="Genomic_DNA"/>
</dbReference>
<dbReference type="EMBL" id="AP014959">
    <property type="status" value="NOT_ANNOTATED_CDS"/>
    <property type="molecule type" value="Genomic_DNA"/>
</dbReference>
<dbReference type="RefSeq" id="XP_015630696.1">
    <property type="nucleotide sequence ID" value="XM_015775210.1"/>
</dbReference>
<dbReference type="RefSeq" id="XP_015630697.1">
    <property type="nucleotide sequence ID" value="XM_015775211.1"/>
</dbReference>
<dbReference type="RefSeq" id="XP_015630698.1">
    <property type="nucleotide sequence ID" value="XM_015775212.1"/>
</dbReference>
<dbReference type="RefSeq" id="XP_015630699.1">
    <property type="nucleotide sequence ID" value="XM_015775213.1"/>
</dbReference>
<dbReference type="RefSeq" id="XP_015630700.1">
    <property type="nucleotide sequence ID" value="XM_015775214.1"/>
</dbReference>
<dbReference type="SMR" id="Q10N34"/>
<dbReference type="FunCoup" id="Q10N34">
    <property type="interactions" value="808"/>
</dbReference>
<dbReference type="STRING" id="39947.Q10N34"/>
<dbReference type="PaxDb" id="39947-Q10N34"/>
<dbReference type="EnsemblPlants" id="Os03t0284100-04">
    <property type="protein sequence ID" value="Os03t0284100-04"/>
    <property type="gene ID" value="Os03g0284100"/>
</dbReference>
<dbReference type="GeneID" id="4332464"/>
<dbReference type="Gramene" id="Os03t0284100-04">
    <property type="protein sequence ID" value="Os03t0284100-04"/>
    <property type="gene ID" value="Os03g0284100"/>
</dbReference>
<dbReference type="KEGG" id="dosa:Os03g0284100"/>
<dbReference type="eggNOG" id="KOG1601">
    <property type="taxonomic scope" value="Eukaryota"/>
</dbReference>
<dbReference type="InParanoid" id="Q10N34"/>
<dbReference type="OrthoDB" id="60033at2759"/>
<dbReference type="PlantReactome" id="R-OSA-8933811">
    <property type="pathway name" value="Circadian rhythm"/>
</dbReference>
<dbReference type="Proteomes" id="UP000000763">
    <property type="component" value="Chromosome 3"/>
</dbReference>
<dbReference type="Proteomes" id="UP000059680">
    <property type="component" value="Chromosome 3"/>
</dbReference>
<dbReference type="ExpressionAtlas" id="Q10N34">
    <property type="expression patterns" value="baseline and differential"/>
</dbReference>
<dbReference type="GO" id="GO:0005634">
    <property type="term" value="C:nucleus"/>
    <property type="evidence" value="ECO:0007669"/>
    <property type="project" value="UniProtKB-SubCell"/>
</dbReference>
<dbReference type="GO" id="GO:0009736">
    <property type="term" value="P:cytokinin-activated signaling pathway"/>
    <property type="evidence" value="ECO:0007669"/>
    <property type="project" value="InterPro"/>
</dbReference>
<dbReference type="GO" id="GO:0000160">
    <property type="term" value="P:phosphorelay signal transduction system"/>
    <property type="evidence" value="ECO:0007669"/>
    <property type="project" value="UniProtKB-KW"/>
</dbReference>
<dbReference type="GO" id="GO:0048511">
    <property type="term" value="P:rhythmic process"/>
    <property type="evidence" value="ECO:0007669"/>
    <property type="project" value="UniProtKB-KW"/>
</dbReference>
<dbReference type="CDD" id="cd17582">
    <property type="entry name" value="psREC_PRR"/>
    <property type="match status" value="1"/>
</dbReference>
<dbReference type="FunFam" id="3.40.50.2300:FF:000214">
    <property type="entry name" value="Two-component response regulator-like PRR37"/>
    <property type="match status" value="1"/>
</dbReference>
<dbReference type="Gene3D" id="3.40.50.2300">
    <property type="match status" value="1"/>
</dbReference>
<dbReference type="InterPro" id="IPR045279">
    <property type="entry name" value="ARR-like"/>
</dbReference>
<dbReference type="InterPro" id="IPR010402">
    <property type="entry name" value="CCT_domain"/>
</dbReference>
<dbReference type="InterPro" id="IPR011006">
    <property type="entry name" value="CheY-like_superfamily"/>
</dbReference>
<dbReference type="InterPro" id="IPR001789">
    <property type="entry name" value="Sig_transdc_resp-reg_receiver"/>
</dbReference>
<dbReference type="PANTHER" id="PTHR43874">
    <property type="entry name" value="TWO-COMPONENT RESPONSE REGULATOR"/>
    <property type="match status" value="1"/>
</dbReference>
<dbReference type="PANTHER" id="PTHR43874:SF125">
    <property type="entry name" value="TWO-COMPONENT RESPONSE REGULATOR-LIKE APRR7"/>
    <property type="match status" value="1"/>
</dbReference>
<dbReference type="Pfam" id="PF06203">
    <property type="entry name" value="CCT"/>
    <property type="match status" value="1"/>
</dbReference>
<dbReference type="Pfam" id="PF00072">
    <property type="entry name" value="Response_reg"/>
    <property type="match status" value="1"/>
</dbReference>
<dbReference type="SMART" id="SM00448">
    <property type="entry name" value="REC"/>
    <property type="match status" value="1"/>
</dbReference>
<dbReference type="SUPFAM" id="SSF52172">
    <property type="entry name" value="CheY-like"/>
    <property type="match status" value="1"/>
</dbReference>
<dbReference type="PROSITE" id="PS51017">
    <property type="entry name" value="CCT"/>
    <property type="match status" value="1"/>
</dbReference>
<dbReference type="PROSITE" id="PS50110">
    <property type="entry name" value="RESPONSE_REGULATORY"/>
    <property type="match status" value="1"/>
</dbReference>
<reference key="1">
    <citation type="journal article" date="2003" name="Plant Cell Physiol.">
        <title>The evolutionarily conserved OsPRR quintet: rice pseudo-response regulators implicated in circadian rhythm.</title>
        <authorList>
            <person name="Murakami M."/>
            <person name="Ashikari M."/>
            <person name="Miura K."/>
            <person name="Yamashino T."/>
            <person name="Mizuno T."/>
        </authorList>
    </citation>
    <scope>NUCLEOTIDE SEQUENCE [MRNA]</scope>
    <scope>INDUCTION</scope>
    <source>
        <strain>cv. Nipponbare</strain>
    </source>
</reference>
<reference key="2">
    <citation type="journal article" date="2005" name="Genome Res.">
        <title>Sequence, annotation, and analysis of synteny between rice chromosome 3 and diverged grass species.</title>
        <authorList>
            <consortium name="The rice chromosome 3 sequencing consortium"/>
            <person name="Buell C.R."/>
            <person name="Yuan Q."/>
            <person name="Ouyang S."/>
            <person name="Liu J."/>
            <person name="Zhu W."/>
            <person name="Wang A."/>
            <person name="Maiti R."/>
            <person name="Haas B."/>
            <person name="Wortman J."/>
            <person name="Pertea M."/>
            <person name="Jones K.M."/>
            <person name="Kim M."/>
            <person name="Overton L."/>
            <person name="Tsitrin T."/>
            <person name="Fadrosh D."/>
            <person name="Bera J."/>
            <person name="Weaver B."/>
            <person name="Jin S."/>
            <person name="Johri S."/>
            <person name="Reardon M."/>
            <person name="Webb K."/>
            <person name="Hill J."/>
            <person name="Moffat K."/>
            <person name="Tallon L."/>
            <person name="Van Aken S."/>
            <person name="Lewis M."/>
            <person name="Utterback T."/>
            <person name="Feldblyum T."/>
            <person name="Zismann V."/>
            <person name="Iobst S."/>
            <person name="Hsiao J."/>
            <person name="de Vazeille A.R."/>
            <person name="Salzberg S.L."/>
            <person name="White O."/>
            <person name="Fraser C.M."/>
            <person name="Yu Y."/>
            <person name="Kim H."/>
            <person name="Rambo T."/>
            <person name="Currie J."/>
            <person name="Collura K."/>
            <person name="Kernodle-Thompson S."/>
            <person name="Wei F."/>
            <person name="Kudrna K."/>
            <person name="Ammiraju J.S.S."/>
            <person name="Luo M."/>
            <person name="Goicoechea J.L."/>
            <person name="Wing R.A."/>
            <person name="Henry D."/>
            <person name="Oates R."/>
            <person name="Palmer M."/>
            <person name="Pries G."/>
            <person name="Saski C."/>
            <person name="Simmons J."/>
            <person name="Soderlund C."/>
            <person name="Nelson W."/>
            <person name="de la Bastide M."/>
            <person name="Spiegel L."/>
            <person name="Nascimento L."/>
            <person name="Huang E."/>
            <person name="Preston R."/>
            <person name="Zutavern T."/>
            <person name="Palmer L."/>
            <person name="O'Shaughnessy A."/>
            <person name="Dike S."/>
            <person name="McCombie W.R."/>
            <person name="Minx P."/>
            <person name="Cordum H."/>
            <person name="Wilson R."/>
            <person name="Jin W."/>
            <person name="Lee H.R."/>
            <person name="Jiang J."/>
            <person name="Jackson S."/>
        </authorList>
    </citation>
    <scope>NUCLEOTIDE SEQUENCE [LARGE SCALE GENOMIC DNA]</scope>
    <source>
        <strain>cv. Nipponbare</strain>
    </source>
</reference>
<reference key="3">
    <citation type="journal article" date="2005" name="Nature">
        <title>The map-based sequence of the rice genome.</title>
        <authorList>
            <consortium name="International rice genome sequencing project (IRGSP)"/>
        </authorList>
    </citation>
    <scope>NUCLEOTIDE SEQUENCE [LARGE SCALE GENOMIC DNA]</scope>
    <source>
        <strain>cv. Nipponbare</strain>
    </source>
</reference>
<reference key="4">
    <citation type="journal article" date="2008" name="Nucleic Acids Res.">
        <title>The rice annotation project database (RAP-DB): 2008 update.</title>
        <authorList>
            <consortium name="The rice annotation project (RAP)"/>
        </authorList>
    </citation>
    <scope>GENOME REANNOTATION</scope>
    <source>
        <strain>cv. Nipponbare</strain>
    </source>
</reference>
<reference key="5">
    <citation type="journal article" date="2013" name="Rice">
        <title>Improvement of the Oryza sativa Nipponbare reference genome using next generation sequence and optical map data.</title>
        <authorList>
            <person name="Kawahara Y."/>
            <person name="de la Bastide M."/>
            <person name="Hamilton J.P."/>
            <person name="Kanamori H."/>
            <person name="McCombie W.R."/>
            <person name="Ouyang S."/>
            <person name="Schwartz D.C."/>
            <person name="Tanaka T."/>
            <person name="Wu J."/>
            <person name="Zhou S."/>
            <person name="Childs K.L."/>
            <person name="Davidson R.M."/>
            <person name="Lin H."/>
            <person name="Quesada-Ocampo L."/>
            <person name="Vaillancourt B."/>
            <person name="Sakai H."/>
            <person name="Lee S.S."/>
            <person name="Kim J."/>
            <person name="Numa H."/>
            <person name="Itoh T."/>
            <person name="Buell C.R."/>
            <person name="Matsumoto T."/>
        </authorList>
    </citation>
    <scope>GENOME REANNOTATION</scope>
    <source>
        <strain>cv. Nipponbare</strain>
    </source>
</reference>
<reference key="6">
    <citation type="journal article" date="2005" name="Biosci. Biotechnol. Biochem.">
        <title>Circadian-associated rice pseudo response regulators (OsPRRs): insight into the control of flowering time.</title>
        <authorList>
            <person name="Murakami M."/>
            <person name="Matsushika A."/>
            <person name="Ashikari M."/>
            <person name="Yamashino T."/>
            <person name="Mizuno T."/>
        </authorList>
    </citation>
    <scope>INDUCTION</scope>
</reference>
<proteinExistence type="evidence at transcript level"/>
<protein>
    <recommendedName>
        <fullName>Two-component response regulator-like PRR73</fullName>
    </recommendedName>
    <alternativeName>
        <fullName>Pseudo-response regulator 73</fullName>
        <shortName>OsPRR73</shortName>
    </alternativeName>
</protein>